<dbReference type="EC" id="3.2.2.27" evidence="2"/>
<dbReference type="EMBL" id="AE014075">
    <property type="protein sequence ID" value="AAN81554.1"/>
    <property type="molecule type" value="Genomic_DNA"/>
</dbReference>
<dbReference type="RefSeq" id="WP_001262725.1">
    <property type="nucleotide sequence ID" value="NC_004431.1"/>
</dbReference>
<dbReference type="STRING" id="199310.c3105"/>
<dbReference type="KEGG" id="ecc:c3105"/>
<dbReference type="eggNOG" id="COG0692">
    <property type="taxonomic scope" value="Bacteria"/>
</dbReference>
<dbReference type="HOGENOM" id="CLU_032162_3_0_6"/>
<dbReference type="Proteomes" id="UP000001410">
    <property type="component" value="Chromosome"/>
</dbReference>
<dbReference type="GO" id="GO:0005737">
    <property type="term" value="C:cytoplasm"/>
    <property type="evidence" value="ECO:0007669"/>
    <property type="project" value="UniProtKB-SubCell"/>
</dbReference>
<dbReference type="GO" id="GO:0004844">
    <property type="term" value="F:uracil DNA N-glycosylase activity"/>
    <property type="evidence" value="ECO:0007669"/>
    <property type="project" value="UniProtKB-UniRule"/>
</dbReference>
<dbReference type="GO" id="GO:0097510">
    <property type="term" value="P:base-excision repair, AP site formation via deaminated base removal"/>
    <property type="evidence" value="ECO:0007669"/>
    <property type="project" value="TreeGrafter"/>
</dbReference>
<dbReference type="CDD" id="cd10027">
    <property type="entry name" value="UDG-F1-like"/>
    <property type="match status" value="1"/>
</dbReference>
<dbReference type="FunFam" id="3.40.470.10:FF:000001">
    <property type="entry name" value="Uracil-DNA glycosylase"/>
    <property type="match status" value="1"/>
</dbReference>
<dbReference type="Gene3D" id="3.40.470.10">
    <property type="entry name" value="Uracil-DNA glycosylase-like domain"/>
    <property type="match status" value="1"/>
</dbReference>
<dbReference type="HAMAP" id="MF_00148">
    <property type="entry name" value="UDG"/>
    <property type="match status" value="1"/>
</dbReference>
<dbReference type="InterPro" id="IPR002043">
    <property type="entry name" value="UDG_fam1"/>
</dbReference>
<dbReference type="InterPro" id="IPR018085">
    <property type="entry name" value="Ura-DNA_Glyclase_AS"/>
</dbReference>
<dbReference type="InterPro" id="IPR005122">
    <property type="entry name" value="Uracil-DNA_glycosylase-like"/>
</dbReference>
<dbReference type="InterPro" id="IPR036895">
    <property type="entry name" value="Uracil-DNA_glycosylase-like_sf"/>
</dbReference>
<dbReference type="NCBIfam" id="NF003588">
    <property type="entry name" value="PRK05254.1-1"/>
    <property type="match status" value="1"/>
</dbReference>
<dbReference type="NCBIfam" id="NF003589">
    <property type="entry name" value="PRK05254.1-2"/>
    <property type="match status" value="1"/>
</dbReference>
<dbReference type="NCBIfam" id="NF003591">
    <property type="entry name" value="PRK05254.1-4"/>
    <property type="match status" value="1"/>
</dbReference>
<dbReference type="NCBIfam" id="NF003592">
    <property type="entry name" value="PRK05254.1-5"/>
    <property type="match status" value="1"/>
</dbReference>
<dbReference type="NCBIfam" id="TIGR00628">
    <property type="entry name" value="ung"/>
    <property type="match status" value="1"/>
</dbReference>
<dbReference type="PANTHER" id="PTHR11264">
    <property type="entry name" value="URACIL-DNA GLYCOSYLASE"/>
    <property type="match status" value="1"/>
</dbReference>
<dbReference type="PANTHER" id="PTHR11264:SF0">
    <property type="entry name" value="URACIL-DNA GLYCOSYLASE"/>
    <property type="match status" value="1"/>
</dbReference>
<dbReference type="Pfam" id="PF03167">
    <property type="entry name" value="UDG"/>
    <property type="match status" value="1"/>
</dbReference>
<dbReference type="SMART" id="SM00986">
    <property type="entry name" value="UDG"/>
    <property type="match status" value="1"/>
</dbReference>
<dbReference type="SMART" id="SM00987">
    <property type="entry name" value="UreE_C"/>
    <property type="match status" value="1"/>
</dbReference>
<dbReference type="SUPFAM" id="SSF52141">
    <property type="entry name" value="Uracil-DNA glycosylase-like"/>
    <property type="match status" value="1"/>
</dbReference>
<dbReference type="PROSITE" id="PS00130">
    <property type="entry name" value="U_DNA_GLYCOSYLASE"/>
    <property type="match status" value="1"/>
</dbReference>
<gene>
    <name evidence="2" type="primary">ung</name>
    <name type="ordered locus">c3105</name>
</gene>
<proteinExistence type="inferred from homology"/>
<protein>
    <recommendedName>
        <fullName evidence="2">Uracil-DNA glycosylase</fullName>
        <shortName evidence="2">UDG</shortName>
        <ecNumber evidence="2">3.2.2.27</ecNumber>
    </recommendedName>
</protein>
<comment type="function">
    <text evidence="2">Excises uracil residues from the DNA which can arise as a result of misincorporation of dUMP residues by DNA polymerase or due to deamination of cytosine.</text>
</comment>
<comment type="catalytic activity">
    <reaction evidence="2">
        <text>Hydrolyzes single-stranded DNA or mismatched double-stranded DNA and polynucleotides, releasing free uracil.</text>
        <dbReference type="EC" id="3.2.2.27"/>
    </reaction>
</comment>
<comment type="subunit">
    <text evidence="1">Monomer.</text>
</comment>
<comment type="subcellular location">
    <subcellularLocation>
        <location evidence="2">Cytoplasm</location>
    </subcellularLocation>
</comment>
<comment type="similarity">
    <text evidence="2">Belongs to the uracil-DNA glycosylase (UDG) superfamily. UNG family.</text>
</comment>
<sequence length="228" mass="25535">MANELTWHDVLAEEKQQPYFLNTLQTVASERQSGVTIYPPQKDVFNAFRFTELGDVKVVILGQDPYHGPGQAHGLAFSVRPGIATPPSLLNMYKELENTIPGFTRPNHGYLESWARQGVLLLNTVLTVRAGQAHSHASLGWETFTDKVISLINQHREGVVFLLWGSHAQKKGAIIDXQRHHVLKAPHPSPLSAHRGFFGCNHFVLANQWLEQRGETPIDWMPVLPAES</sequence>
<feature type="initiator methionine" description="Removed" evidence="1">
    <location>
        <position position="1"/>
    </location>
</feature>
<feature type="chain" id="PRO_0000176092" description="Uracil-DNA glycosylase">
    <location>
        <begin position="2"/>
        <end position="228"/>
    </location>
</feature>
<feature type="active site" description="Proton acceptor" evidence="2">
    <location>
        <position position="64"/>
    </location>
</feature>
<reference key="1">
    <citation type="journal article" date="2002" name="Proc. Natl. Acad. Sci. U.S.A.">
        <title>Extensive mosaic structure revealed by the complete genome sequence of uropathogenic Escherichia coli.</title>
        <authorList>
            <person name="Welch R.A."/>
            <person name="Burland V."/>
            <person name="Plunkett G. III"/>
            <person name="Redford P."/>
            <person name="Roesch P."/>
            <person name="Rasko D."/>
            <person name="Buckles E.L."/>
            <person name="Liou S.-R."/>
            <person name="Boutin A."/>
            <person name="Hackett J."/>
            <person name="Stroud D."/>
            <person name="Mayhew G.F."/>
            <person name="Rose D.J."/>
            <person name="Zhou S."/>
            <person name="Schwartz D.C."/>
            <person name="Perna N.T."/>
            <person name="Mobley H.L.T."/>
            <person name="Donnenberg M.S."/>
            <person name="Blattner F.R."/>
        </authorList>
    </citation>
    <scope>NUCLEOTIDE SEQUENCE [LARGE SCALE GENOMIC DNA]</scope>
    <source>
        <strain>CFT073 / ATCC 700928 / UPEC</strain>
    </source>
</reference>
<organism>
    <name type="scientific">Escherichia coli O6:H1 (strain CFT073 / ATCC 700928 / UPEC)</name>
    <dbReference type="NCBI Taxonomy" id="199310"/>
    <lineage>
        <taxon>Bacteria</taxon>
        <taxon>Pseudomonadati</taxon>
        <taxon>Pseudomonadota</taxon>
        <taxon>Gammaproteobacteria</taxon>
        <taxon>Enterobacterales</taxon>
        <taxon>Enterobacteriaceae</taxon>
        <taxon>Escherichia</taxon>
    </lineage>
</organism>
<keyword id="KW-0963">Cytoplasm</keyword>
<keyword id="KW-0227">DNA damage</keyword>
<keyword id="KW-0234">DNA repair</keyword>
<keyword id="KW-0378">Hydrolase</keyword>
<keyword id="KW-1185">Reference proteome</keyword>
<accession>Q8FF08</accession>
<evidence type="ECO:0000250" key="1"/>
<evidence type="ECO:0000255" key="2">
    <source>
        <dbReference type="HAMAP-Rule" id="MF_00148"/>
    </source>
</evidence>
<name>UNG_ECOL6</name>